<proteinExistence type="inferred from homology"/>
<feature type="chain" id="PRO_1000121216" description="DNA-directed RNA polymerase subunit omega">
    <location>
        <begin position="1"/>
        <end position="91"/>
    </location>
</feature>
<name>RPOZ_ECO5E</name>
<reference key="1">
    <citation type="journal article" date="2011" name="Proc. Natl. Acad. Sci. U.S.A.">
        <title>Genomic anatomy of Escherichia coli O157:H7 outbreaks.</title>
        <authorList>
            <person name="Eppinger M."/>
            <person name="Mammel M.K."/>
            <person name="Leclerc J.E."/>
            <person name="Ravel J."/>
            <person name="Cebula T.A."/>
        </authorList>
    </citation>
    <scope>NUCLEOTIDE SEQUENCE [LARGE SCALE GENOMIC DNA]</scope>
    <source>
        <strain>EC4115 / EHEC</strain>
    </source>
</reference>
<evidence type="ECO:0000255" key="1">
    <source>
        <dbReference type="HAMAP-Rule" id="MF_00366"/>
    </source>
</evidence>
<comment type="function">
    <text evidence="1">Promotes RNA polymerase assembly. Latches the N- and C-terminal regions of the beta' subunit thereby facilitating its interaction with the beta and alpha subunits.</text>
</comment>
<comment type="catalytic activity">
    <reaction evidence="1">
        <text>RNA(n) + a ribonucleoside 5'-triphosphate = RNA(n+1) + diphosphate</text>
        <dbReference type="Rhea" id="RHEA:21248"/>
        <dbReference type="Rhea" id="RHEA-COMP:14527"/>
        <dbReference type="Rhea" id="RHEA-COMP:17342"/>
        <dbReference type="ChEBI" id="CHEBI:33019"/>
        <dbReference type="ChEBI" id="CHEBI:61557"/>
        <dbReference type="ChEBI" id="CHEBI:140395"/>
        <dbReference type="EC" id="2.7.7.6"/>
    </reaction>
</comment>
<comment type="subunit">
    <text evidence="1">The RNAP catalytic core consists of 2 alpha, 1 beta, 1 beta' and 1 omega subunit. When a sigma factor is associated with the core the holoenzyme is formed, which can initiate transcription.</text>
</comment>
<comment type="similarity">
    <text evidence="1">Belongs to the RNA polymerase subunit omega family.</text>
</comment>
<sequence>MARVTVQDAVEKIGNRFDLVLVAARRARQMQVGGKDPLVPEENDKTTVIALREIEEGLINNQILDVRERQEQQEQEAAELQAVTAIAEGRR</sequence>
<organism>
    <name type="scientific">Escherichia coli O157:H7 (strain EC4115 / EHEC)</name>
    <dbReference type="NCBI Taxonomy" id="444450"/>
    <lineage>
        <taxon>Bacteria</taxon>
        <taxon>Pseudomonadati</taxon>
        <taxon>Pseudomonadota</taxon>
        <taxon>Gammaproteobacteria</taxon>
        <taxon>Enterobacterales</taxon>
        <taxon>Enterobacteriaceae</taxon>
        <taxon>Escherichia</taxon>
    </lineage>
</organism>
<dbReference type="EC" id="2.7.7.6" evidence="1"/>
<dbReference type="EMBL" id="CP001164">
    <property type="protein sequence ID" value="ACI38873.1"/>
    <property type="molecule type" value="Genomic_DNA"/>
</dbReference>
<dbReference type="RefSeq" id="WP_000135058.1">
    <property type="nucleotide sequence ID" value="NC_011353.1"/>
</dbReference>
<dbReference type="SMR" id="B5YWE9"/>
<dbReference type="GeneID" id="98390719"/>
<dbReference type="KEGG" id="ecf:ECH74115_5021"/>
<dbReference type="HOGENOM" id="CLU_125406_5_3_6"/>
<dbReference type="GO" id="GO:0000428">
    <property type="term" value="C:DNA-directed RNA polymerase complex"/>
    <property type="evidence" value="ECO:0007669"/>
    <property type="project" value="UniProtKB-KW"/>
</dbReference>
<dbReference type="GO" id="GO:0003677">
    <property type="term" value="F:DNA binding"/>
    <property type="evidence" value="ECO:0007669"/>
    <property type="project" value="UniProtKB-UniRule"/>
</dbReference>
<dbReference type="GO" id="GO:0003899">
    <property type="term" value="F:DNA-directed RNA polymerase activity"/>
    <property type="evidence" value="ECO:0007669"/>
    <property type="project" value="UniProtKB-UniRule"/>
</dbReference>
<dbReference type="GO" id="GO:0006351">
    <property type="term" value="P:DNA-templated transcription"/>
    <property type="evidence" value="ECO:0007669"/>
    <property type="project" value="UniProtKB-UniRule"/>
</dbReference>
<dbReference type="FunFam" id="3.90.940.10:FF:000001">
    <property type="entry name" value="DNA-directed RNA polymerase subunit omega"/>
    <property type="match status" value="1"/>
</dbReference>
<dbReference type="Gene3D" id="3.90.940.10">
    <property type="match status" value="1"/>
</dbReference>
<dbReference type="HAMAP" id="MF_00366">
    <property type="entry name" value="RNApol_bact_RpoZ"/>
    <property type="match status" value="1"/>
</dbReference>
<dbReference type="InterPro" id="IPR003716">
    <property type="entry name" value="DNA-dir_RNA_pol_omega"/>
</dbReference>
<dbReference type="InterPro" id="IPR006110">
    <property type="entry name" value="Pol_omega/Rpo6/RPB6"/>
</dbReference>
<dbReference type="InterPro" id="IPR036161">
    <property type="entry name" value="RPB6/omega-like_sf"/>
</dbReference>
<dbReference type="NCBIfam" id="TIGR00690">
    <property type="entry name" value="rpoZ"/>
    <property type="match status" value="1"/>
</dbReference>
<dbReference type="PANTHER" id="PTHR34476">
    <property type="entry name" value="DNA-DIRECTED RNA POLYMERASE SUBUNIT OMEGA"/>
    <property type="match status" value="1"/>
</dbReference>
<dbReference type="PANTHER" id="PTHR34476:SF1">
    <property type="entry name" value="DNA-DIRECTED RNA POLYMERASE SUBUNIT OMEGA"/>
    <property type="match status" value="1"/>
</dbReference>
<dbReference type="Pfam" id="PF01192">
    <property type="entry name" value="RNA_pol_Rpb6"/>
    <property type="match status" value="1"/>
</dbReference>
<dbReference type="SMART" id="SM01409">
    <property type="entry name" value="RNA_pol_Rpb6"/>
    <property type="match status" value="1"/>
</dbReference>
<dbReference type="SUPFAM" id="SSF63562">
    <property type="entry name" value="RPB6/omega subunit-like"/>
    <property type="match status" value="1"/>
</dbReference>
<accession>B5YWE9</accession>
<gene>
    <name evidence="1" type="primary">rpoZ</name>
    <name type="ordered locus">ECH74115_5021</name>
</gene>
<keyword id="KW-0240">DNA-directed RNA polymerase</keyword>
<keyword id="KW-0548">Nucleotidyltransferase</keyword>
<keyword id="KW-0804">Transcription</keyword>
<keyword id="KW-0808">Transferase</keyword>
<protein>
    <recommendedName>
        <fullName evidence="1">DNA-directed RNA polymerase subunit omega</fullName>
        <shortName evidence="1">RNAP omega subunit</shortName>
        <ecNumber evidence="1">2.7.7.6</ecNumber>
    </recommendedName>
    <alternativeName>
        <fullName evidence="1">RNA polymerase omega subunit</fullName>
    </alternativeName>
    <alternativeName>
        <fullName evidence="1">Transcriptase subunit omega</fullName>
    </alternativeName>
</protein>